<reference key="1">
    <citation type="journal article" date="1995" name="J. Biol. Chem.">
        <title>Cloning and expression of the mammalian cytosolic branched chain aminotransferase isoenzyme.</title>
        <authorList>
            <person name="Hutson S.M."/>
            <person name="Bledsoe R.K."/>
            <person name="Hall T.R."/>
            <person name="Dawson P.A."/>
        </authorList>
    </citation>
    <scope>NUCLEOTIDE SEQUENCE [MRNA]</scope>
    <scope>PARTIAL PROTEIN SEQUENCE</scope>
    <scope>TISSUE SPECIFICITY</scope>
    <source>
        <strain>Sprague-Dawley</strain>
        <tissue>Brain</tissue>
    </source>
</reference>
<reference key="2">
    <citation type="journal article" date="2004" name="Genome Res.">
        <title>The status, quality, and expansion of the NIH full-length cDNA project: the Mammalian Gene Collection (MGC).</title>
        <authorList>
            <consortium name="The MGC Project Team"/>
        </authorList>
    </citation>
    <scope>NUCLEOTIDE SEQUENCE [LARGE SCALE MRNA]</scope>
    <source>
        <tissue>Brain</tissue>
    </source>
</reference>
<reference key="3">
    <citation type="submission" date="2007-09" db="UniProtKB">
        <authorList>
            <person name="Lubec G."/>
            <person name="Kang S.U."/>
            <person name="Lubec S."/>
        </authorList>
    </citation>
    <scope>PROTEIN SEQUENCE OF 394-401</scope>
    <scope>IDENTIFICATION BY MASS SPECTROMETRY</scope>
    <source>
        <strain>Sprague-Dawley</strain>
        <tissue>Brain</tissue>
    </source>
</reference>
<reference key="4">
    <citation type="journal article" date="1993" name="J. Biol. Chem.">
        <title>Branched chain aminotransferase isoenzymes. Purification and characterization of the rat brain isoenzyme.</title>
        <authorList>
            <person name="Hall T.R."/>
            <person name="Wallin R."/>
            <person name="Reinhart G.D."/>
            <person name="Hutson S.M."/>
        </authorList>
    </citation>
    <scope>FUNCTION</scope>
    <scope>CATALYTIC ACTIVITY</scope>
    <scope>COFACTOR</scope>
    <scope>SUBCELLULAR LOCATION</scope>
</reference>
<feature type="chain" id="PRO_0000103294" description="Branched-chain-amino-acid aminotransferase, cytosolic">
    <location>
        <begin position="1"/>
        <end position="411"/>
    </location>
</feature>
<feature type="modified residue" description="N6-(pyridoxal phosphate)lysine" evidence="1">
    <location>
        <position position="247"/>
    </location>
</feature>
<proteinExistence type="evidence at protein level"/>
<organism>
    <name type="scientific">Rattus norvegicus</name>
    <name type="common">Rat</name>
    <dbReference type="NCBI Taxonomy" id="10116"/>
    <lineage>
        <taxon>Eukaryota</taxon>
        <taxon>Metazoa</taxon>
        <taxon>Chordata</taxon>
        <taxon>Craniata</taxon>
        <taxon>Vertebrata</taxon>
        <taxon>Euteleostomi</taxon>
        <taxon>Mammalia</taxon>
        <taxon>Eutheria</taxon>
        <taxon>Euarchontoglires</taxon>
        <taxon>Glires</taxon>
        <taxon>Rodentia</taxon>
        <taxon>Myomorpha</taxon>
        <taxon>Muroidea</taxon>
        <taxon>Muridae</taxon>
        <taxon>Murinae</taxon>
        <taxon>Rattus</taxon>
    </lineage>
</organism>
<comment type="function">
    <text evidence="2">Catalyzes the first reaction in the catabolism of the essential branched chain amino acids leucine, isoleucine, and valine.</text>
</comment>
<comment type="catalytic activity">
    <reaction evidence="2">
        <text>L-leucine + 2-oxoglutarate = 4-methyl-2-oxopentanoate + L-glutamate</text>
        <dbReference type="Rhea" id="RHEA:18321"/>
        <dbReference type="ChEBI" id="CHEBI:16810"/>
        <dbReference type="ChEBI" id="CHEBI:17865"/>
        <dbReference type="ChEBI" id="CHEBI:29985"/>
        <dbReference type="ChEBI" id="CHEBI:57427"/>
        <dbReference type="EC" id="2.6.1.42"/>
    </reaction>
    <physiologicalReaction direction="left-to-right" evidence="2">
        <dbReference type="Rhea" id="RHEA:18322"/>
    </physiologicalReaction>
</comment>
<comment type="catalytic activity">
    <reaction evidence="2">
        <text>L-isoleucine + 2-oxoglutarate = (S)-3-methyl-2-oxopentanoate + L-glutamate</text>
        <dbReference type="Rhea" id="RHEA:24801"/>
        <dbReference type="ChEBI" id="CHEBI:16810"/>
        <dbReference type="ChEBI" id="CHEBI:29985"/>
        <dbReference type="ChEBI" id="CHEBI:35146"/>
        <dbReference type="ChEBI" id="CHEBI:58045"/>
        <dbReference type="EC" id="2.6.1.42"/>
    </reaction>
    <physiologicalReaction direction="left-to-right" evidence="2">
        <dbReference type="Rhea" id="RHEA:24802"/>
    </physiologicalReaction>
</comment>
<comment type="catalytic activity">
    <reaction evidence="2">
        <text>L-valine + 2-oxoglutarate = 3-methyl-2-oxobutanoate + L-glutamate</text>
        <dbReference type="Rhea" id="RHEA:24813"/>
        <dbReference type="ChEBI" id="CHEBI:11851"/>
        <dbReference type="ChEBI" id="CHEBI:16810"/>
        <dbReference type="ChEBI" id="CHEBI:29985"/>
        <dbReference type="ChEBI" id="CHEBI:57762"/>
        <dbReference type="EC" id="2.6.1.42"/>
    </reaction>
    <physiologicalReaction direction="left-to-right" evidence="2">
        <dbReference type="Rhea" id="RHEA:24814"/>
    </physiologicalReaction>
</comment>
<comment type="cofactor">
    <cofactor evidence="2">
        <name>pyridoxal 5'-phosphate</name>
        <dbReference type="ChEBI" id="CHEBI:597326"/>
    </cofactor>
</comment>
<comment type="biophysicochemical properties">
    <kinetics>
        <KM evidence="2">1 mM for L-leucine</KM>
        <KM evidence="2">1 mM for L-isoleucine</KM>
        <KM evidence="2">5 mM for L-valine</KM>
    </kinetics>
</comment>
<comment type="subunit">
    <text evidence="1">Homodimer.</text>
</comment>
<comment type="subcellular location">
    <subcellularLocation>
        <location evidence="2">Cytoplasm</location>
    </subcellularLocation>
</comment>
<comment type="tissue specificity">
    <text evidence="3">Brain, low expression in ovary and placenta, but not found in liver, kidney, and skeletal muscle.</text>
</comment>
<comment type="PTM">
    <text evidence="3">The N-terminus is blocked.</text>
</comment>
<comment type="similarity">
    <text evidence="4">Belongs to the class-IV pyridoxal-phosphate-dependent aminotransferase family.</text>
</comment>
<evidence type="ECO:0000250" key="1">
    <source>
        <dbReference type="UniProtKB" id="P54687"/>
    </source>
</evidence>
<evidence type="ECO:0000269" key="2">
    <source>
    </source>
</evidence>
<evidence type="ECO:0000269" key="3">
    <source>
    </source>
</evidence>
<evidence type="ECO:0000305" key="4"/>
<dbReference type="EC" id="2.6.1.42" evidence="2"/>
<dbReference type="EMBL" id="U35774">
    <property type="protein sequence ID" value="AAC52385.1"/>
    <property type="molecule type" value="mRNA"/>
</dbReference>
<dbReference type="EMBL" id="BC087710">
    <property type="protein sequence ID" value="AAH87710.1"/>
    <property type="molecule type" value="mRNA"/>
</dbReference>
<dbReference type="RefSeq" id="NP_058949.1">
    <property type="nucleotide sequence ID" value="NM_017253.4"/>
</dbReference>
<dbReference type="SMR" id="P54690"/>
<dbReference type="BioGRID" id="248224">
    <property type="interactions" value="1"/>
</dbReference>
<dbReference type="FunCoup" id="P54690">
    <property type="interactions" value="1338"/>
</dbReference>
<dbReference type="STRING" id="10116.ENSRNOP00000021193"/>
<dbReference type="BindingDB" id="P54690"/>
<dbReference type="ChEMBL" id="CHEMBL4678"/>
<dbReference type="iPTMnet" id="P54690"/>
<dbReference type="PhosphoSitePlus" id="P54690"/>
<dbReference type="SwissPalm" id="P54690"/>
<dbReference type="PaxDb" id="10116-ENSRNOP00000021193"/>
<dbReference type="GeneID" id="29592"/>
<dbReference type="KEGG" id="rno:29592"/>
<dbReference type="UCSC" id="RGD:2195">
    <property type="organism name" value="rat"/>
</dbReference>
<dbReference type="AGR" id="RGD:2195"/>
<dbReference type="CTD" id="586"/>
<dbReference type="RGD" id="2195">
    <property type="gene designation" value="Bcat1"/>
</dbReference>
<dbReference type="VEuPathDB" id="HostDB:ENSRNOG00000015514"/>
<dbReference type="eggNOG" id="KOG0975">
    <property type="taxonomic scope" value="Eukaryota"/>
</dbReference>
<dbReference type="InParanoid" id="P54690"/>
<dbReference type="PhylomeDB" id="P54690"/>
<dbReference type="TreeFam" id="TF300882"/>
<dbReference type="Reactome" id="R-RNO-70895">
    <property type="pathway name" value="Branched-chain amino acid catabolism"/>
</dbReference>
<dbReference type="SABIO-RK" id="P54690"/>
<dbReference type="PRO" id="PR:P54690"/>
<dbReference type="Proteomes" id="UP000002494">
    <property type="component" value="Chromosome 4"/>
</dbReference>
<dbReference type="Bgee" id="ENSRNOG00000015514">
    <property type="expression patterns" value="Expressed in cerebellum and 19 other cell types or tissues"/>
</dbReference>
<dbReference type="ExpressionAtlas" id="P54690">
    <property type="expression patterns" value="baseline and differential"/>
</dbReference>
<dbReference type="GO" id="GO:0005737">
    <property type="term" value="C:cytoplasm"/>
    <property type="evidence" value="ECO:0000314"/>
    <property type="project" value="UniProtKB"/>
</dbReference>
<dbReference type="GO" id="GO:0005829">
    <property type="term" value="C:cytosol"/>
    <property type="evidence" value="ECO:0000266"/>
    <property type="project" value="RGD"/>
</dbReference>
<dbReference type="GO" id="GO:0005739">
    <property type="term" value="C:mitochondrion"/>
    <property type="evidence" value="ECO:0000318"/>
    <property type="project" value="GO_Central"/>
</dbReference>
<dbReference type="GO" id="GO:0004084">
    <property type="term" value="F:branched-chain-amino-acid transaminase activity"/>
    <property type="evidence" value="ECO:0000314"/>
    <property type="project" value="RGD"/>
</dbReference>
<dbReference type="GO" id="GO:0042802">
    <property type="term" value="F:identical protein binding"/>
    <property type="evidence" value="ECO:0000314"/>
    <property type="project" value="RGD"/>
</dbReference>
<dbReference type="GO" id="GO:0052656">
    <property type="term" value="F:L-isoleucine-2-oxoglutarate transaminase activity"/>
    <property type="evidence" value="ECO:0000314"/>
    <property type="project" value="UniProtKB"/>
</dbReference>
<dbReference type="GO" id="GO:0052654">
    <property type="term" value="F:L-leucine-2-oxoglutarate transaminase activity"/>
    <property type="evidence" value="ECO:0000314"/>
    <property type="project" value="UniProtKB"/>
</dbReference>
<dbReference type="GO" id="GO:0052655">
    <property type="term" value="F:L-valine-2-oxoglutarate transaminase activity"/>
    <property type="evidence" value="ECO:0000314"/>
    <property type="project" value="UniProtKB"/>
</dbReference>
<dbReference type="GO" id="GO:0009083">
    <property type="term" value="P:branched-chain amino acid catabolic process"/>
    <property type="evidence" value="ECO:0000266"/>
    <property type="project" value="RGD"/>
</dbReference>
<dbReference type="GO" id="GO:0009098">
    <property type="term" value="P:L-leucine biosynthetic process"/>
    <property type="evidence" value="ECO:0000318"/>
    <property type="project" value="GO_Central"/>
</dbReference>
<dbReference type="GO" id="GO:0009099">
    <property type="term" value="P:L-valine biosynthetic process"/>
    <property type="evidence" value="ECO:0000318"/>
    <property type="project" value="GO_Central"/>
</dbReference>
<dbReference type="GO" id="GO:0006629">
    <property type="term" value="P:lipid metabolic process"/>
    <property type="evidence" value="ECO:0007669"/>
    <property type="project" value="UniProtKB-KW"/>
</dbReference>
<dbReference type="CDD" id="cd01557">
    <property type="entry name" value="BCAT_beta_family"/>
    <property type="match status" value="1"/>
</dbReference>
<dbReference type="FunFam" id="3.20.10.10:FF:000005">
    <property type="entry name" value="Branched-chain-amino-acid aminotransferase"/>
    <property type="match status" value="1"/>
</dbReference>
<dbReference type="FunFam" id="3.30.470.10:FF:000002">
    <property type="entry name" value="Branched-chain-amino-acid aminotransferase"/>
    <property type="match status" value="1"/>
</dbReference>
<dbReference type="Gene3D" id="3.30.470.10">
    <property type="match status" value="1"/>
</dbReference>
<dbReference type="Gene3D" id="3.20.10.10">
    <property type="entry name" value="D-amino Acid Aminotransferase, subunit A, domain 2"/>
    <property type="match status" value="1"/>
</dbReference>
<dbReference type="InterPro" id="IPR001544">
    <property type="entry name" value="Aminotrans_IV"/>
</dbReference>
<dbReference type="InterPro" id="IPR018300">
    <property type="entry name" value="Aminotrans_IV_CS"/>
</dbReference>
<dbReference type="InterPro" id="IPR036038">
    <property type="entry name" value="Aminotransferase-like"/>
</dbReference>
<dbReference type="InterPro" id="IPR005786">
    <property type="entry name" value="B_amino_transII"/>
</dbReference>
<dbReference type="InterPro" id="IPR043132">
    <property type="entry name" value="BCAT-like_C"/>
</dbReference>
<dbReference type="InterPro" id="IPR043131">
    <property type="entry name" value="BCAT-like_N"/>
</dbReference>
<dbReference type="InterPro" id="IPR033939">
    <property type="entry name" value="BCAT_family"/>
</dbReference>
<dbReference type="NCBIfam" id="TIGR01123">
    <property type="entry name" value="ilvE_II"/>
    <property type="match status" value="1"/>
</dbReference>
<dbReference type="NCBIfam" id="NF009897">
    <property type="entry name" value="PRK13357.1"/>
    <property type="match status" value="1"/>
</dbReference>
<dbReference type="PANTHER" id="PTHR11825:SF70">
    <property type="entry name" value="BRANCHED-CHAIN-AMINO-ACID AMINOTRANSFERASE, CYTOSOLIC"/>
    <property type="match status" value="1"/>
</dbReference>
<dbReference type="PANTHER" id="PTHR11825">
    <property type="entry name" value="SUBGROUP IIII AMINOTRANSFERASE"/>
    <property type="match status" value="1"/>
</dbReference>
<dbReference type="Pfam" id="PF01063">
    <property type="entry name" value="Aminotran_4"/>
    <property type="match status" value="1"/>
</dbReference>
<dbReference type="PIRSF" id="PIRSF006468">
    <property type="entry name" value="BCAT1"/>
    <property type="match status" value="1"/>
</dbReference>
<dbReference type="SUPFAM" id="SSF56752">
    <property type="entry name" value="D-aminoacid aminotransferase-like PLP-dependent enzymes"/>
    <property type="match status" value="1"/>
</dbReference>
<dbReference type="PROSITE" id="PS00770">
    <property type="entry name" value="AA_TRANSFER_CLASS_4"/>
    <property type="match status" value="1"/>
</dbReference>
<gene>
    <name type="primary">Bcat1</name>
</gene>
<keyword id="KW-0028">Amino-acid biosynthesis</keyword>
<keyword id="KW-0032">Aminotransferase</keyword>
<keyword id="KW-0100">Branched-chain amino acid biosynthesis</keyword>
<keyword id="KW-0963">Cytoplasm</keyword>
<keyword id="KW-0903">Direct protein sequencing</keyword>
<keyword id="KW-0443">Lipid metabolism</keyword>
<keyword id="KW-0663">Pyridoxal phosphate</keyword>
<keyword id="KW-1185">Reference proteome</keyword>
<keyword id="KW-0808">Transferase</keyword>
<sequence>MAYLSRATATLARQDCSNGCSASYAEEEELEASTESYDEEGGSEASTQTFRAKDLIITKADVLKKKPDPSSLVFGASFTDHMLMVEWTSKYGWDKPHIKPFENLSIHPAASVLHYAVELFEGLKAFRGVDNKIRLFRPDLNMKRMCRSAVRTTLPEFDKEELLQCVLQLIQLDREWVPYSTSASLYIRPTFIGIEPSLGVKKPSKALLFVILSPVGSYFSNGTFSPVSLWANPKFVRSWKGGTGDFKMGCNYGSSLLAQCEAAENGCHQVLWLYGKENRITEVGTMNLFLYWINKDGEEELATPPLDGVILPGVTRQSILELGEEWGEFKVCERHITMDDLSTALEENRVKEMFGSGTACVVCPVASILYKGQMLHIPTMENGHKLSSRIMAKLTDIQYGRIKSEWTLELP</sequence>
<name>BCAT1_RAT</name>
<protein>
    <recommendedName>
        <fullName>Branched-chain-amino-acid aminotransferase, cytosolic</fullName>
        <shortName>BCAT(c)</shortName>
        <ecNumber evidence="2">2.6.1.42</ecNumber>
    </recommendedName>
</protein>
<accession>P54690</accession>